<comment type="function">
    <text evidence="3">Involved in the transport of four structurally unrelated drugs, including doxorubicin and mitoxantrone. Transmembrane domains (TMD) form a pore in the membrane and the ATP-binding domain (NBD) is responsible for energy generation.</text>
</comment>
<comment type="activity regulation">
    <text evidence="3">Inhibited by ortho-vanadate.</text>
</comment>
<comment type="subunit">
    <text evidence="3">Heterodimer composed of YheH and YheI.</text>
</comment>
<comment type="subcellular location">
    <subcellularLocation>
        <location evidence="3">Cell membrane</location>
        <topology evidence="2 3">Multi-pass membrane protein</topology>
    </subcellularLocation>
</comment>
<comment type="induction">
    <text evidence="3">Induced by several classes of structurally unrelated antibiotics, such as erythromycin, fusidic acid or linezolid.</text>
</comment>
<comment type="miscellaneous">
    <text>Overexpression reduces the sporulation efficiency possibly by modulating the function of KinA.</text>
</comment>
<comment type="similarity">
    <text evidence="4">Belongs to the ABC transporter superfamily.</text>
</comment>
<accession>O07549</accession>
<accession>Q796W5</accession>
<protein>
    <recommendedName>
        <fullName>Probable multidrug resistance ABC transporter ATP-binding/permease protein YheH</fullName>
        <ecNumber>7.6.2.-</ecNumber>
    </recommendedName>
</protein>
<feature type="chain" id="PRO_0000376078" description="Probable multidrug resistance ABC transporter ATP-binding/permease protein YheH">
    <location>
        <begin position="1"/>
        <end position="673"/>
    </location>
</feature>
<feature type="transmembrane region" description="Helical" evidence="2">
    <location>
        <begin position="18"/>
        <end position="38"/>
    </location>
</feature>
<feature type="transmembrane region" description="Helical" evidence="2">
    <location>
        <begin position="146"/>
        <end position="166"/>
    </location>
</feature>
<feature type="transmembrane region" description="Helical" evidence="2">
    <location>
        <begin position="223"/>
        <end position="243"/>
    </location>
</feature>
<feature type="transmembrane region" description="Helical" evidence="2">
    <location>
        <begin position="245"/>
        <end position="265"/>
    </location>
</feature>
<feature type="transmembrane region" description="Helical" evidence="2">
    <location>
        <begin position="347"/>
        <end position="367"/>
    </location>
</feature>
<feature type="domain" description="ABC transmembrane type-1" evidence="2">
    <location>
        <begin position="18"/>
        <end position="398"/>
    </location>
</feature>
<feature type="domain" description="ABC transporter" evidence="1">
    <location>
        <begin position="430"/>
        <end position="664"/>
    </location>
</feature>
<feature type="binding site" evidence="1">
    <location>
        <begin position="463"/>
        <end position="470"/>
    </location>
    <ligand>
        <name>ATP</name>
        <dbReference type="ChEBI" id="CHEBI:30616"/>
    </ligand>
</feature>
<feature type="helix" evidence="5">
    <location>
        <begin position="3"/>
        <end position="12"/>
    </location>
</feature>
<feature type="helix" evidence="5">
    <location>
        <begin position="15"/>
        <end position="46"/>
    </location>
</feature>
<feature type="helix" evidence="7">
    <location>
        <begin position="47"/>
        <end position="49"/>
    </location>
</feature>
<feature type="strand" evidence="7">
    <location>
        <begin position="54"/>
        <end position="57"/>
    </location>
</feature>
<feature type="strand" evidence="8">
    <location>
        <begin position="60"/>
        <end position="62"/>
    </location>
</feature>
<feature type="turn" evidence="5">
    <location>
        <begin position="68"/>
        <end position="70"/>
    </location>
</feature>
<feature type="strand" evidence="5">
    <location>
        <begin position="74"/>
        <end position="79"/>
    </location>
</feature>
<feature type="strand" evidence="7">
    <location>
        <begin position="80"/>
        <end position="82"/>
    </location>
</feature>
<feature type="strand" evidence="5">
    <location>
        <begin position="89"/>
        <end position="93"/>
    </location>
</feature>
<feature type="strand" evidence="5">
    <location>
        <begin position="96"/>
        <end position="100"/>
    </location>
</feature>
<feature type="turn" evidence="8">
    <location>
        <begin position="113"/>
        <end position="115"/>
    </location>
</feature>
<feature type="turn" evidence="6">
    <location>
        <begin position="121"/>
        <end position="123"/>
    </location>
</feature>
<feature type="strand" evidence="7">
    <location>
        <begin position="126"/>
        <end position="129"/>
    </location>
</feature>
<feature type="helix" evidence="5">
    <location>
        <begin position="136"/>
        <end position="140"/>
    </location>
</feature>
<feature type="helix" evidence="5">
    <location>
        <begin position="144"/>
        <end position="194"/>
    </location>
</feature>
<feature type="helix" evidence="5">
    <location>
        <begin position="198"/>
        <end position="202"/>
    </location>
</feature>
<feature type="helix" evidence="5">
    <location>
        <begin position="206"/>
        <end position="214"/>
    </location>
</feature>
<feature type="helix" evidence="5">
    <location>
        <begin position="217"/>
        <end position="225"/>
    </location>
</feature>
<feature type="helix" evidence="5">
    <location>
        <begin position="227"/>
        <end position="248"/>
    </location>
</feature>
<feature type="helix" evidence="5">
    <location>
        <begin position="252"/>
        <end position="272"/>
    </location>
</feature>
<feature type="helix" evidence="5">
    <location>
        <begin position="275"/>
        <end position="297"/>
    </location>
</feature>
<feature type="helix" evidence="5">
    <location>
        <begin position="299"/>
        <end position="304"/>
    </location>
</feature>
<feature type="helix" evidence="5">
    <location>
        <begin position="308"/>
        <end position="327"/>
    </location>
</feature>
<feature type="turn" evidence="5">
    <location>
        <begin position="330"/>
        <end position="335"/>
    </location>
</feature>
<feature type="helix" evidence="5">
    <location>
        <begin position="337"/>
        <end position="360"/>
    </location>
</feature>
<feature type="turn" evidence="5">
    <location>
        <begin position="361"/>
        <end position="365"/>
    </location>
</feature>
<feature type="helix" evidence="5">
    <location>
        <begin position="370"/>
        <end position="390"/>
    </location>
</feature>
<feature type="helix" evidence="5">
    <location>
        <begin position="393"/>
        <end position="410"/>
    </location>
</feature>
<feature type="strand" evidence="5">
    <location>
        <begin position="430"/>
        <end position="432"/>
    </location>
</feature>
<feature type="turn" evidence="5">
    <location>
        <begin position="440"/>
        <end position="442"/>
    </location>
</feature>
<feature type="strand" evidence="8">
    <location>
        <begin position="444"/>
        <end position="449"/>
    </location>
</feature>
<feature type="strand" evidence="5">
    <location>
        <begin position="452"/>
        <end position="456"/>
    </location>
</feature>
<feature type="strand" evidence="5">
    <location>
        <begin position="458"/>
        <end position="460"/>
    </location>
</feature>
<feature type="strand" evidence="5">
    <location>
        <begin position="463"/>
        <end position="465"/>
    </location>
</feature>
<feature type="helix" evidence="5">
    <location>
        <begin position="469"/>
        <end position="476"/>
    </location>
</feature>
<feature type="strand" evidence="5">
    <location>
        <begin position="483"/>
        <end position="485"/>
    </location>
</feature>
<feature type="strand" evidence="5">
    <location>
        <begin position="487"/>
        <end position="489"/>
    </location>
</feature>
<feature type="helix" evidence="5">
    <location>
        <begin position="494"/>
        <end position="496"/>
    </location>
</feature>
<feature type="helix" evidence="5">
    <location>
        <begin position="499"/>
        <end position="502"/>
    </location>
</feature>
<feature type="strand" evidence="5">
    <location>
        <begin position="505"/>
        <end position="509"/>
    </location>
</feature>
<feature type="helix" evidence="5">
    <location>
        <begin position="520"/>
        <end position="525"/>
    </location>
</feature>
<feature type="strand" evidence="5">
    <location>
        <begin position="529"/>
        <end position="531"/>
    </location>
</feature>
<feature type="helix" evidence="5">
    <location>
        <begin position="536"/>
        <end position="542"/>
    </location>
</feature>
<feature type="helix" evidence="5">
    <location>
        <begin position="546"/>
        <end position="549"/>
    </location>
</feature>
<feature type="strand" evidence="5">
    <location>
        <begin position="550"/>
        <end position="552"/>
    </location>
</feature>
<feature type="turn" evidence="5">
    <location>
        <begin position="554"/>
        <end position="556"/>
    </location>
</feature>
<feature type="strand" evidence="5">
    <location>
        <begin position="560"/>
        <end position="563"/>
    </location>
</feature>
<feature type="strand" evidence="7">
    <location>
        <begin position="565"/>
        <end position="567"/>
    </location>
</feature>
<feature type="helix" evidence="5">
    <location>
        <begin position="569"/>
        <end position="582"/>
    </location>
</feature>
<feature type="strand" evidence="5">
    <location>
        <begin position="586"/>
        <end position="592"/>
    </location>
</feature>
<feature type="strand" evidence="8">
    <location>
        <begin position="595"/>
        <end position="597"/>
    </location>
</feature>
<feature type="helix" evidence="5">
    <location>
        <begin position="600"/>
        <end position="603"/>
    </location>
</feature>
<feature type="helix" evidence="5">
    <location>
        <begin position="605"/>
        <end position="608"/>
    </location>
</feature>
<feature type="strand" evidence="5">
    <location>
        <begin position="616"/>
        <end position="621"/>
    </location>
</feature>
<feature type="helix" evidence="5">
    <location>
        <begin position="625"/>
        <end position="628"/>
    </location>
</feature>
<feature type="strand" evidence="5">
    <location>
        <begin position="632"/>
        <end position="635"/>
    </location>
</feature>
<feature type="helix" evidence="5">
    <location>
        <begin position="638"/>
        <end position="640"/>
    </location>
</feature>
<feature type="strand" evidence="7">
    <location>
        <begin position="641"/>
        <end position="646"/>
    </location>
</feature>
<feature type="helix" evidence="7">
    <location>
        <begin position="648"/>
        <end position="652"/>
    </location>
</feature>
<feature type="helix" evidence="5">
    <location>
        <begin position="654"/>
        <end position="662"/>
    </location>
</feature>
<proteinExistence type="evidence at protein level"/>
<evidence type="ECO:0000255" key="1">
    <source>
        <dbReference type="PROSITE-ProRule" id="PRU00434"/>
    </source>
</evidence>
<evidence type="ECO:0000255" key="2">
    <source>
        <dbReference type="PROSITE-ProRule" id="PRU00441"/>
    </source>
</evidence>
<evidence type="ECO:0000269" key="3">
    <source>
    </source>
</evidence>
<evidence type="ECO:0000305" key="4"/>
<evidence type="ECO:0007829" key="5">
    <source>
        <dbReference type="PDB" id="8FHK"/>
    </source>
</evidence>
<evidence type="ECO:0007829" key="6">
    <source>
        <dbReference type="PDB" id="8FPF"/>
    </source>
</evidence>
<evidence type="ECO:0007829" key="7">
    <source>
        <dbReference type="PDB" id="8SZC"/>
    </source>
</evidence>
<evidence type="ECO:0007829" key="8">
    <source>
        <dbReference type="PDB" id="8T1P"/>
    </source>
</evidence>
<organism>
    <name type="scientific">Bacillus subtilis (strain 168)</name>
    <dbReference type="NCBI Taxonomy" id="224308"/>
    <lineage>
        <taxon>Bacteria</taxon>
        <taxon>Bacillati</taxon>
        <taxon>Bacillota</taxon>
        <taxon>Bacilli</taxon>
        <taxon>Bacillales</taxon>
        <taxon>Bacillaceae</taxon>
        <taxon>Bacillus</taxon>
    </lineage>
</organism>
<keyword id="KW-0002">3D-structure</keyword>
<keyword id="KW-0046">Antibiotic resistance</keyword>
<keyword id="KW-0067">ATP-binding</keyword>
<keyword id="KW-1003">Cell membrane</keyword>
<keyword id="KW-0472">Membrane</keyword>
<keyword id="KW-0547">Nucleotide-binding</keyword>
<keyword id="KW-1185">Reference proteome</keyword>
<keyword id="KW-1278">Translocase</keyword>
<keyword id="KW-0812">Transmembrane</keyword>
<keyword id="KW-1133">Transmembrane helix</keyword>
<keyword id="KW-0813">Transport</keyword>
<name>YHEH_BACSU</name>
<dbReference type="EC" id="7.6.2.-"/>
<dbReference type="EMBL" id="Y14080">
    <property type="protein sequence ID" value="CAA74449.1"/>
    <property type="molecule type" value="Genomic_DNA"/>
</dbReference>
<dbReference type="EMBL" id="AL009126">
    <property type="protein sequence ID" value="CAB12811.1"/>
    <property type="molecule type" value="Genomic_DNA"/>
</dbReference>
<dbReference type="PIR" id="H69828">
    <property type="entry name" value="H69828"/>
</dbReference>
<dbReference type="RefSeq" id="WP_003233292.1">
    <property type="nucleotide sequence ID" value="NZ_OZ025638.1"/>
</dbReference>
<dbReference type="PDB" id="7M33">
    <property type="method" value="EM"/>
    <property type="resolution" value="3.55 A"/>
    <property type="chains" value="D=1-673"/>
</dbReference>
<dbReference type="PDB" id="8FHK">
    <property type="method" value="EM"/>
    <property type="resolution" value="2.90 A"/>
    <property type="chains" value="D=1-673"/>
</dbReference>
<dbReference type="PDB" id="8FMV">
    <property type="method" value="EM"/>
    <property type="resolution" value="3.34 A"/>
    <property type="chains" value="D=1-673"/>
</dbReference>
<dbReference type="PDB" id="8FPF">
    <property type="method" value="EM"/>
    <property type="resolution" value="3.27 A"/>
    <property type="chains" value="D=1-673"/>
</dbReference>
<dbReference type="PDB" id="8SZC">
    <property type="method" value="EM"/>
    <property type="resolution" value="3.06 A"/>
    <property type="chains" value="D=1-673"/>
</dbReference>
<dbReference type="PDB" id="8T1P">
    <property type="method" value="EM"/>
    <property type="resolution" value="2.96 A"/>
    <property type="chains" value="D=1-673"/>
</dbReference>
<dbReference type="PDB" id="8T3K">
    <property type="method" value="EM"/>
    <property type="resolution" value="3.33 A"/>
    <property type="chains" value="D=1-673"/>
</dbReference>
<dbReference type="PDBsum" id="7M33"/>
<dbReference type="PDBsum" id="8FHK"/>
<dbReference type="PDBsum" id="8FMV"/>
<dbReference type="PDBsum" id="8FPF"/>
<dbReference type="PDBsum" id="8SZC"/>
<dbReference type="PDBsum" id="8T1P"/>
<dbReference type="PDBsum" id="8T3K"/>
<dbReference type="EMDB" id="EMD-23641"/>
<dbReference type="EMDB" id="EMD-29087"/>
<dbReference type="EMDB" id="EMD-29297"/>
<dbReference type="EMDB" id="EMD-29362"/>
<dbReference type="EMDB" id="EMD-40908"/>
<dbReference type="EMDB" id="EMD-40974"/>
<dbReference type="EMDB" id="EMD-41004"/>
<dbReference type="EMDB" id="EMD-41058"/>
<dbReference type="SMR" id="O07549"/>
<dbReference type="FunCoup" id="O07549">
    <property type="interactions" value="234"/>
</dbReference>
<dbReference type="STRING" id="224308.BSU09720"/>
<dbReference type="TCDB" id="3.A.1.106.8">
    <property type="family name" value="the atp-binding cassette (abc) superfamily"/>
</dbReference>
<dbReference type="PaxDb" id="224308-BSU09720"/>
<dbReference type="EnsemblBacteria" id="CAB12811">
    <property type="protein sequence ID" value="CAB12811"/>
    <property type="gene ID" value="BSU_09720"/>
</dbReference>
<dbReference type="GeneID" id="939287"/>
<dbReference type="KEGG" id="bsu:BSU09720"/>
<dbReference type="PATRIC" id="fig|224308.179.peg.1045"/>
<dbReference type="eggNOG" id="COG1132">
    <property type="taxonomic scope" value="Bacteria"/>
</dbReference>
<dbReference type="InParanoid" id="O07549"/>
<dbReference type="OrthoDB" id="9770415at2"/>
<dbReference type="PhylomeDB" id="O07549"/>
<dbReference type="BioCyc" id="BSUB:BSU09720-MONOMER"/>
<dbReference type="Proteomes" id="UP000001570">
    <property type="component" value="Chromosome"/>
</dbReference>
<dbReference type="GO" id="GO:0005886">
    <property type="term" value="C:plasma membrane"/>
    <property type="evidence" value="ECO:0007669"/>
    <property type="project" value="UniProtKB-SubCell"/>
</dbReference>
<dbReference type="GO" id="GO:0140359">
    <property type="term" value="F:ABC-type transporter activity"/>
    <property type="evidence" value="ECO:0007669"/>
    <property type="project" value="InterPro"/>
</dbReference>
<dbReference type="GO" id="GO:0005524">
    <property type="term" value="F:ATP binding"/>
    <property type="evidence" value="ECO:0007669"/>
    <property type="project" value="UniProtKB-KW"/>
</dbReference>
<dbReference type="GO" id="GO:0016887">
    <property type="term" value="F:ATP hydrolysis activity"/>
    <property type="evidence" value="ECO:0007669"/>
    <property type="project" value="InterPro"/>
</dbReference>
<dbReference type="GO" id="GO:0034040">
    <property type="term" value="F:ATPase-coupled lipid transmembrane transporter activity"/>
    <property type="evidence" value="ECO:0000318"/>
    <property type="project" value="GO_Central"/>
</dbReference>
<dbReference type="GO" id="GO:0046677">
    <property type="term" value="P:response to antibiotic"/>
    <property type="evidence" value="ECO:0007669"/>
    <property type="project" value="UniProtKB-KW"/>
</dbReference>
<dbReference type="GO" id="GO:0055085">
    <property type="term" value="P:transmembrane transport"/>
    <property type="evidence" value="ECO:0000318"/>
    <property type="project" value="GO_Central"/>
</dbReference>
<dbReference type="CDD" id="cd18544">
    <property type="entry name" value="ABC_6TM_TmrA_like"/>
    <property type="match status" value="1"/>
</dbReference>
<dbReference type="CDD" id="cd03254">
    <property type="entry name" value="ABCC_Glucan_exporter_like"/>
    <property type="match status" value="1"/>
</dbReference>
<dbReference type="FunFam" id="3.40.50.300:FF:000287">
    <property type="entry name" value="Multidrug ABC transporter ATP-binding protein"/>
    <property type="match status" value="1"/>
</dbReference>
<dbReference type="FunFam" id="1.20.1560.10:FF:000246">
    <property type="entry name" value="Probable multidrug resistance ABC transporter ATP-binding/permease protein YheH"/>
    <property type="match status" value="1"/>
</dbReference>
<dbReference type="Gene3D" id="1.20.1560.10">
    <property type="entry name" value="ABC transporter type 1, transmembrane domain"/>
    <property type="match status" value="1"/>
</dbReference>
<dbReference type="Gene3D" id="3.40.50.300">
    <property type="entry name" value="P-loop containing nucleotide triphosphate hydrolases"/>
    <property type="match status" value="1"/>
</dbReference>
<dbReference type="InterPro" id="IPR003593">
    <property type="entry name" value="AAA+_ATPase"/>
</dbReference>
<dbReference type="InterPro" id="IPR011527">
    <property type="entry name" value="ABC1_TM_dom"/>
</dbReference>
<dbReference type="InterPro" id="IPR036640">
    <property type="entry name" value="ABC1_TM_sf"/>
</dbReference>
<dbReference type="InterPro" id="IPR003439">
    <property type="entry name" value="ABC_transporter-like_ATP-bd"/>
</dbReference>
<dbReference type="InterPro" id="IPR017871">
    <property type="entry name" value="ABC_transporter-like_CS"/>
</dbReference>
<dbReference type="InterPro" id="IPR027417">
    <property type="entry name" value="P-loop_NTPase"/>
</dbReference>
<dbReference type="InterPro" id="IPR039421">
    <property type="entry name" value="Type_1_exporter"/>
</dbReference>
<dbReference type="PANTHER" id="PTHR24221">
    <property type="entry name" value="ATP-BINDING CASSETTE SUB-FAMILY B"/>
    <property type="match status" value="1"/>
</dbReference>
<dbReference type="PANTHER" id="PTHR24221:SF430">
    <property type="entry name" value="MULTIDRUG RESISTANCE ABC TRANSPORTER ATP-BINDING_PERMEASE PROTEIN YHEH-RELATED"/>
    <property type="match status" value="1"/>
</dbReference>
<dbReference type="Pfam" id="PF00664">
    <property type="entry name" value="ABC_membrane"/>
    <property type="match status" value="1"/>
</dbReference>
<dbReference type="Pfam" id="PF00005">
    <property type="entry name" value="ABC_tran"/>
    <property type="match status" value="1"/>
</dbReference>
<dbReference type="SMART" id="SM00382">
    <property type="entry name" value="AAA"/>
    <property type="match status" value="1"/>
</dbReference>
<dbReference type="SUPFAM" id="SSF90123">
    <property type="entry name" value="ABC transporter transmembrane region"/>
    <property type="match status" value="1"/>
</dbReference>
<dbReference type="SUPFAM" id="SSF52540">
    <property type="entry name" value="P-loop containing nucleoside triphosphate hydrolases"/>
    <property type="match status" value="1"/>
</dbReference>
<dbReference type="PROSITE" id="PS50929">
    <property type="entry name" value="ABC_TM1F"/>
    <property type="match status" value="1"/>
</dbReference>
<dbReference type="PROSITE" id="PS00211">
    <property type="entry name" value="ABC_TRANSPORTER_1"/>
    <property type="match status" value="1"/>
</dbReference>
<dbReference type="PROSITE" id="PS50893">
    <property type="entry name" value="ABC_TRANSPORTER_2"/>
    <property type="match status" value="1"/>
</dbReference>
<reference key="1">
    <citation type="journal article" date="1998" name="Microbiology">
        <title>The 172 kb prkA-addAB region from 83 degrees to 97 degrees of the Bacillus subtilis chromosome contains several dysfunctional genes, the glyB marker, many genes encoding transporter proteins, and the ubiquitous hit gene.</title>
        <authorList>
            <person name="Noback M.A."/>
            <person name="Holsappel S."/>
            <person name="Kiewiet R."/>
            <person name="Terpstra P."/>
            <person name="Wambutt R."/>
            <person name="Wedler H."/>
            <person name="Venema G."/>
            <person name="Bron S."/>
        </authorList>
    </citation>
    <scope>NUCLEOTIDE SEQUENCE [GENOMIC DNA]</scope>
    <source>
        <strain>168</strain>
    </source>
</reference>
<reference key="2">
    <citation type="journal article" date="1997" name="Nature">
        <title>The complete genome sequence of the Gram-positive bacterium Bacillus subtilis.</title>
        <authorList>
            <person name="Kunst F."/>
            <person name="Ogasawara N."/>
            <person name="Moszer I."/>
            <person name="Albertini A.M."/>
            <person name="Alloni G."/>
            <person name="Azevedo V."/>
            <person name="Bertero M.G."/>
            <person name="Bessieres P."/>
            <person name="Bolotin A."/>
            <person name="Borchert S."/>
            <person name="Borriss R."/>
            <person name="Boursier L."/>
            <person name="Brans A."/>
            <person name="Braun M."/>
            <person name="Brignell S.C."/>
            <person name="Bron S."/>
            <person name="Brouillet S."/>
            <person name="Bruschi C.V."/>
            <person name="Caldwell B."/>
            <person name="Capuano V."/>
            <person name="Carter N.M."/>
            <person name="Choi S.-K."/>
            <person name="Codani J.-J."/>
            <person name="Connerton I.F."/>
            <person name="Cummings N.J."/>
            <person name="Daniel R.A."/>
            <person name="Denizot F."/>
            <person name="Devine K.M."/>
            <person name="Duesterhoeft A."/>
            <person name="Ehrlich S.D."/>
            <person name="Emmerson P.T."/>
            <person name="Entian K.-D."/>
            <person name="Errington J."/>
            <person name="Fabret C."/>
            <person name="Ferrari E."/>
            <person name="Foulger D."/>
            <person name="Fritz C."/>
            <person name="Fujita M."/>
            <person name="Fujita Y."/>
            <person name="Fuma S."/>
            <person name="Galizzi A."/>
            <person name="Galleron N."/>
            <person name="Ghim S.-Y."/>
            <person name="Glaser P."/>
            <person name="Goffeau A."/>
            <person name="Golightly E.J."/>
            <person name="Grandi G."/>
            <person name="Guiseppi G."/>
            <person name="Guy B.J."/>
            <person name="Haga K."/>
            <person name="Haiech J."/>
            <person name="Harwood C.R."/>
            <person name="Henaut A."/>
            <person name="Hilbert H."/>
            <person name="Holsappel S."/>
            <person name="Hosono S."/>
            <person name="Hullo M.-F."/>
            <person name="Itaya M."/>
            <person name="Jones L.-M."/>
            <person name="Joris B."/>
            <person name="Karamata D."/>
            <person name="Kasahara Y."/>
            <person name="Klaerr-Blanchard M."/>
            <person name="Klein C."/>
            <person name="Kobayashi Y."/>
            <person name="Koetter P."/>
            <person name="Koningstein G."/>
            <person name="Krogh S."/>
            <person name="Kumano M."/>
            <person name="Kurita K."/>
            <person name="Lapidus A."/>
            <person name="Lardinois S."/>
            <person name="Lauber J."/>
            <person name="Lazarevic V."/>
            <person name="Lee S.-M."/>
            <person name="Levine A."/>
            <person name="Liu H."/>
            <person name="Masuda S."/>
            <person name="Mauel C."/>
            <person name="Medigue C."/>
            <person name="Medina N."/>
            <person name="Mellado R.P."/>
            <person name="Mizuno M."/>
            <person name="Moestl D."/>
            <person name="Nakai S."/>
            <person name="Noback M."/>
            <person name="Noone D."/>
            <person name="O'Reilly M."/>
            <person name="Ogawa K."/>
            <person name="Ogiwara A."/>
            <person name="Oudega B."/>
            <person name="Park S.-H."/>
            <person name="Parro V."/>
            <person name="Pohl T.M."/>
            <person name="Portetelle D."/>
            <person name="Porwollik S."/>
            <person name="Prescott A.M."/>
            <person name="Presecan E."/>
            <person name="Pujic P."/>
            <person name="Purnelle B."/>
            <person name="Rapoport G."/>
            <person name="Rey M."/>
            <person name="Reynolds S."/>
            <person name="Rieger M."/>
            <person name="Rivolta C."/>
            <person name="Rocha E."/>
            <person name="Roche B."/>
            <person name="Rose M."/>
            <person name="Sadaie Y."/>
            <person name="Sato T."/>
            <person name="Scanlan E."/>
            <person name="Schleich S."/>
            <person name="Schroeter R."/>
            <person name="Scoffone F."/>
            <person name="Sekiguchi J."/>
            <person name="Sekowska A."/>
            <person name="Seror S.J."/>
            <person name="Serror P."/>
            <person name="Shin B.-S."/>
            <person name="Soldo B."/>
            <person name="Sorokin A."/>
            <person name="Tacconi E."/>
            <person name="Takagi T."/>
            <person name="Takahashi H."/>
            <person name="Takemaru K."/>
            <person name="Takeuchi M."/>
            <person name="Tamakoshi A."/>
            <person name="Tanaka T."/>
            <person name="Terpstra P."/>
            <person name="Tognoni A."/>
            <person name="Tosato V."/>
            <person name="Uchiyama S."/>
            <person name="Vandenbol M."/>
            <person name="Vannier F."/>
            <person name="Vassarotti A."/>
            <person name="Viari A."/>
            <person name="Wambutt R."/>
            <person name="Wedler E."/>
            <person name="Wedler H."/>
            <person name="Weitzenegger T."/>
            <person name="Winters P."/>
            <person name="Wipat A."/>
            <person name="Yamamoto H."/>
            <person name="Yamane K."/>
            <person name="Yasumoto K."/>
            <person name="Yata K."/>
            <person name="Yoshida K."/>
            <person name="Yoshikawa H.-F."/>
            <person name="Zumstein E."/>
            <person name="Yoshikawa H."/>
            <person name="Danchin A."/>
        </authorList>
    </citation>
    <scope>NUCLEOTIDE SEQUENCE [LARGE SCALE GENOMIC DNA]</scope>
    <source>
        <strain>168</strain>
    </source>
</reference>
<reference key="3">
    <citation type="journal article" date="2006" name="FEMS Microbiol. Lett.">
        <title>The putative ABC transporter YheH/YheI is involved in the signalling pathway that activates KinA during sporulation initiation.</title>
        <authorList>
            <person name="Fukushima S."/>
            <person name="Yoshimura M."/>
            <person name="Chibazakura T."/>
            <person name="Sato T."/>
            <person name="Yoshikawa H."/>
        </authorList>
    </citation>
    <scope>OVEREXPRESSION</scope>
    <source>
        <strain>168</strain>
    </source>
</reference>
<reference key="4">
    <citation type="journal article" date="2009" name="Biochim. Biophys. Acta">
        <title>The YheI/YheH heterodimer from Bacillus subtilis is a multidrug ABC transporter.</title>
        <authorList>
            <person name="Torres C."/>
            <person name="Galian C."/>
            <person name="Freiberg C."/>
            <person name="Fantino J.-R."/>
            <person name="Jault J.-M."/>
        </authorList>
    </citation>
    <scope>FUNCTION AS A TRANSPORTER</scope>
    <scope>ATPASE ACTIVITY</scope>
    <scope>ACTIVITY REGULATION</scope>
    <scope>SUBUNIT</scope>
    <scope>SUBCELLULAR LOCATION</scope>
    <scope>INDUCTION</scope>
    <source>
        <strain>168</strain>
    </source>
</reference>
<sequence length="673" mass="76305">MKIGKTLWRYALLYRKLLITAVLLLTVAVGAELTGPFIGKKMIDDHILGIEKTWYEAAEKDKNAVQFHGVSYVREDRLQEPVSKAKEAHIYQVGMAFYFVDQAVSFDGNRTVSDGKLTITNGDKSRAYAAEKLTKQELFQFYQPEIKGMVLLICLYGGLLVFSVFFQYGQHYLLQMSANRIIQKMRQDVFSHIQKMPIRYFDNLPAGKVVARITNDTEAIRDLYVTVLSTFVTSGIYMFGIFTALFLLDVKLAFVCLAIVPIIWLWSVIYRRYASYYNQKIRSINSDINAKMNESIQGMTIIQAFRHQKETMREFEELNESHFYFQNRMLNLNSLMSHNLVNVIRNLAFVCLIWHFGGASLNAAGIVSIGVLYAFVDYLNRLFQPITGIVNQFSKLELARVSAGRVFELLEEKNTEEAGEPAKERALGRVEFRDVSFAYQEGEEVLKHISFTAQKGETVALVGHTGSGKSSILNLLFRFYDAQKGDVLIDGKSIYNMSRQELRSHMGIVLQDPYLFSGTIGSNVSLDDERMTEEEIKNALRQVGAEPLLKKLPKGINEPVIEKGSTLSSGERQLISFARALAFDPAILILDEATAHIDTETEAVIQKALDVVKQGRTTFVIAHRLSTIRNADQILVLDKGEIVERGNHEELMALEGQYYQMYELQKGQKHSIA</sequence>
<gene>
    <name type="primary">yheH</name>
    <name type="ordered locus">BSU09720</name>
</gene>